<gene>
    <name evidence="1" type="primary">matK</name>
</gene>
<organism>
    <name type="scientific">Blitum bonus-henricus</name>
    <name type="common">Good King Henry</name>
    <name type="synonym">Chenopodium bonus-henricus</name>
    <dbReference type="NCBI Taxonomy" id="122298"/>
    <lineage>
        <taxon>Eukaryota</taxon>
        <taxon>Viridiplantae</taxon>
        <taxon>Streptophyta</taxon>
        <taxon>Embryophyta</taxon>
        <taxon>Tracheophyta</taxon>
        <taxon>Spermatophyta</taxon>
        <taxon>Magnoliopsida</taxon>
        <taxon>eudicotyledons</taxon>
        <taxon>Gunneridae</taxon>
        <taxon>Pentapetalae</taxon>
        <taxon>Caryophyllales</taxon>
        <taxon>Chenopodiaceae</taxon>
        <taxon>Chenopodioideae</taxon>
        <taxon>Anserineae</taxon>
        <taxon>Blitum</taxon>
    </lineage>
</organism>
<accession>Q5J2X4</accession>
<keyword id="KW-0150">Chloroplast</keyword>
<keyword id="KW-0507">mRNA processing</keyword>
<keyword id="KW-0934">Plastid</keyword>
<keyword id="KW-0694">RNA-binding</keyword>
<keyword id="KW-0819">tRNA processing</keyword>
<geneLocation type="chloroplast"/>
<sequence length="505" mass="59535">MEEFQRHIELDRSWQHNFLYPLIFQEYIYAFAYDHGLNKSILLENSGDKKYSLLIVKRLITRMYQQNHLILSANDSNQNAILGHKQKNNLYSQMITEGFAVIVEIPFSLLLISSLGEKKIVKSHNLRSIHSIFPFLEDKLLHLNYVLDILITYPAHLEILVQTLRYWVKDASSLHLLRFFLYEYRNLNSLITPNQLISFLKKRNQRLFLFLYNFHVCEYESLFVFLCNQSSYLRSTSFGALIERIYFYGKLKYLVKVFTKDFGVILWLFREPFPHYVRYQGKSILASKGTSLLMHKWKYYLIYFGQCHFSVWSQPKRLYINRLSNHSLDFMGFLSSVRLNSSVIRSQMLENSFLIENISKKFDTIVPIIPLVGSLAKAKFCNVLGHPISKSVWTDLSDSDILDRFGRICRNISHYYSGSSRXXXXXXXXXXXRIFCARTLSGKHKSTVRAFLNRLRSEFLEEFFTEEEKVLSLILPRDSSISRGLYRGRIWYLDIICIHNLANDE</sequence>
<proteinExistence type="inferred from homology"/>
<feature type="chain" id="PRO_0000143329" description="Maturase K">
    <location>
        <begin position="1"/>
        <end position="505"/>
    </location>
</feature>
<reference key="1">
    <citation type="journal article" date="2005" name="Ann. Mo. Bot. Gard.">
        <title>Phylogenetics of Amaranthaceae based on matK/trnK sequence data -- evidence from parsimony, likelihood, and Bayesian analyses.</title>
        <authorList>
            <person name="Mueller K.F."/>
            <person name="Borsch T."/>
        </authorList>
    </citation>
    <scope>NUCLEOTIDE SEQUENCE [GENOMIC DNA]</scope>
</reference>
<comment type="function">
    <text evidence="1">Usually encoded in the trnK tRNA gene intron. Probably assists in splicing its own and other chloroplast group II introns.</text>
</comment>
<comment type="subcellular location">
    <subcellularLocation>
        <location>Plastid</location>
        <location>Chloroplast</location>
    </subcellularLocation>
</comment>
<comment type="similarity">
    <text evidence="1">Belongs to the intron maturase 2 family. MatK subfamily.</text>
</comment>
<dbReference type="EMBL" id="AY514834">
    <property type="protein sequence ID" value="AAT28264.1"/>
    <property type="molecule type" value="Genomic_DNA"/>
</dbReference>
<dbReference type="GO" id="GO:0009507">
    <property type="term" value="C:chloroplast"/>
    <property type="evidence" value="ECO:0007669"/>
    <property type="project" value="UniProtKB-SubCell"/>
</dbReference>
<dbReference type="GO" id="GO:0003723">
    <property type="term" value="F:RNA binding"/>
    <property type="evidence" value="ECO:0007669"/>
    <property type="project" value="UniProtKB-KW"/>
</dbReference>
<dbReference type="GO" id="GO:0006397">
    <property type="term" value="P:mRNA processing"/>
    <property type="evidence" value="ECO:0007669"/>
    <property type="project" value="UniProtKB-KW"/>
</dbReference>
<dbReference type="GO" id="GO:0008380">
    <property type="term" value="P:RNA splicing"/>
    <property type="evidence" value="ECO:0007669"/>
    <property type="project" value="UniProtKB-UniRule"/>
</dbReference>
<dbReference type="GO" id="GO:0008033">
    <property type="term" value="P:tRNA processing"/>
    <property type="evidence" value="ECO:0007669"/>
    <property type="project" value="UniProtKB-KW"/>
</dbReference>
<dbReference type="HAMAP" id="MF_01390">
    <property type="entry name" value="MatK"/>
    <property type="match status" value="1"/>
</dbReference>
<dbReference type="InterPro" id="IPR024937">
    <property type="entry name" value="Domain_X"/>
</dbReference>
<dbReference type="InterPro" id="IPR002866">
    <property type="entry name" value="Maturase_MatK"/>
</dbReference>
<dbReference type="InterPro" id="IPR024942">
    <property type="entry name" value="Maturase_MatK_N"/>
</dbReference>
<dbReference type="PANTHER" id="PTHR34811">
    <property type="entry name" value="MATURASE K"/>
    <property type="match status" value="1"/>
</dbReference>
<dbReference type="PANTHER" id="PTHR34811:SF1">
    <property type="entry name" value="MATURASE K"/>
    <property type="match status" value="1"/>
</dbReference>
<dbReference type="Pfam" id="PF01348">
    <property type="entry name" value="Intron_maturas2"/>
    <property type="match status" value="1"/>
</dbReference>
<dbReference type="Pfam" id="PF01824">
    <property type="entry name" value="MatK_N"/>
    <property type="match status" value="1"/>
</dbReference>
<protein>
    <recommendedName>
        <fullName evidence="1">Maturase K</fullName>
    </recommendedName>
    <alternativeName>
        <fullName evidence="1">Intron maturase</fullName>
    </alternativeName>
</protein>
<evidence type="ECO:0000255" key="1">
    <source>
        <dbReference type="HAMAP-Rule" id="MF_01390"/>
    </source>
</evidence>
<name>MATK_BITBH</name>